<name>CCME_CERS1</name>
<evidence type="ECO:0000255" key="1">
    <source>
        <dbReference type="HAMAP-Rule" id="MF_01959"/>
    </source>
</evidence>
<dbReference type="EMBL" id="CP000577">
    <property type="protein sequence ID" value="ABN76701.1"/>
    <property type="molecule type" value="Genomic_DNA"/>
</dbReference>
<dbReference type="RefSeq" id="WP_002720104.1">
    <property type="nucleotide sequence ID" value="NC_009049.1"/>
</dbReference>
<dbReference type="SMR" id="A3PK35"/>
<dbReference type="GeneID" id="67446687"/>
<dbReference type="KEGG" id="rsh:Rsph17029_1591"/>
<dbReference type="HOGENOM" id="CLU_079503_1_1_5"/>
<dbReference type="GO" id="GO:0005886">
    <property type="term" value="C:plasma membrane"/>
    <property type="evidence" value="ECO:0007669"/>
    <property type="project" value="UniProtKB-SubCell"/>
</dbReference>
<dbReference type="GO" id="GO:0020037">
    <property type="term" value="F:heme binding"/>
    <property type="evidence" value="ECO:0007669"/>
    <property type="project" value="InterPro"/>
</dbReference>
<dbReference type="GO" id="GO:0046872">
    <property type="term" value="F:metal ion binding"/>
    <property type="evidence" value="ECO:0007669"/>
    <property type="project" value="UniProtKB-KW"/>
</dbReference>
<dbReference type="GO" id="GO:0017004">
    <property type="term" value="P:cytochrome complex assembly"/>
    <property type="evidence" value="ECO:0007669"/>
    <property type="project" value="UniProtKB-KW"/>
</dbReference>
<dbReference type="Gene3D" id="2.40.50.140">
    <property type="entry name" value="Nucleic acid-binding proteins"/>
    <property type="match status" value="1"/>
</dbReference>
<dbReference type="HAMAP" id="MF_01959">
    <property type="entry name" value="CcmE"/>
    <property type="match status" value="1"/>
</dbReference>
<dbReference type="InterPro" id="IPR004329">
    <property type="entry name" value="CcmE"/>
</dbReference>
<dbReference type="InterPro" id="IPR036127">
    <property type="entry name" value="CcmE-like_sf"/>
</dbReference>
<dbReference type="InterPro" id="IPR012340">
    <property type="entry name" value="NA-bd_OB-fold"/>
</dbReference>
<dbReference type="NCBIfam" id="NF009727">
    <property type="entry name" value="PRK13254.1-1"/>
    <property type="match status" value="1"/>
</dbReference>
<dbReference type="NCBIfam" id="NF009731">
    <property type="entry name" value="PRK13254.1-5"/>
    <property type="match status" value="1"/>
</dbReference>
<dbReference type="PANTHER" id="PTHR34128">
    <property type="entry name" value="CYTOCHROME C-TYPE BIOGENESIS PROTEIN CCME HOMOLOG, MITOCHONDRIAL"/>
    <property type="match status" value="1"/>
</dbReference>
<dbReference type="PANTHER" id="PTHR34128:SF2">
    <property type="entry name" value="CYTOCHROME C-TYPE BIOGENESIS PROTEIN CCME HOMOLOG, MITOCHONDRIAL"/>
    <property type="match status" value="1"/>
</dbReference>
<dbReference type="Pfam" id="PF03100">
    <property type="entry name" value="CcmE"/>
    <property type="match status" value="1"/>
</dbReference>
<dbReference type="SUPFAM" id="SSF82093">
    <property type="entry name" value="Heme chaperone CcmE"/>
    <property type="match status" value="1"/>
</dbReference>
<accession>A3PK35</accession>
<sequence length="151" mass="16265">MKGLKKKRRIQIIALAFVALAGSTALIGYAMRDGINFFRSPTQVVEAPPPETEVFRIGGLVEKGSLVRGQGETVTFRVTDTNATVPVSFTGVLPDLFAEDAGMVGTGRLVGGVFEASEILAKHDETYMPKEVVDALKEQGVFQHTEDQPQG</sequence>
<reference key="1">
    <citation type="submission" date="2007-02" db="EMBL/GenBank/DDBJ databases">
        <title>Complete sequence of chromosome 1 of Rhodobacter sphaeroides ATCC 17029.</title>
        <authorList>
            <person name="Copeland A."/>
            <person name="Lucas S."/>
            <person name="Lapidus A."/>
            <person name="Barry K."/>
            <person name="Detter J.C."/>
            <person name="Glavina del Rio T."/>
            <person name="Hammon N."/>
            <person name="Israni S."/>
            <person name="Dalin E."/>
            <person name="Tice H."/>
            <person name="Pitluck S."/>
            <person name="Kiss H."/>
            <person name="Brettin T."/>
            <person name="Bruce D."/>
            <person name="Han C."/>
            <person name="Tapia R."/>
            <person name="Gilna P."/>
            <person name="Schmutz J."/>
            <person name="Larimer F."/>
            <person name="Land M."/>
            <person name="Hauser L."/>
            <person name="Kyrpides N."/>
            <person name="Mikhailova N."/>
            <person name="Richardson P."/>
            <person name="Mackenzie C."/>
            <person name="Choudhary M."/>
            <person name="Donohue T.J."/>
            <person name="Kaplan S."/>
        </authorList>
    </citation>
    <scope>NUCLEOTIDE SEQUENCE [LARGE SCALE GENOMIC DNA]</scope>
    <source>
        <strain>ATCC 17029 / ATH 2.4.9</strain>
    </source>
</reference>
<comment type="function">
    <text evidence="1">Heme chaperone required for the biogenesis of c-type cytochromes. Transiently binds heme delivered by CcmC and transfers the heme to apo-cytochromes in a process facilitated by CcmF and CcmH.</text>
</comment>
<comment type="subcellular location">
    <subcellularLocation>
        <location evidence="1">Cell inner membrane</location>
        <topology evidence="1">Single-pass type II membrane protein</topology>
        <orientation evidence="1">Periplasmic side</orientation>
    </subcellularLocation>
</comment>
<comment type="similarity">
    <text evidence="1">Belongs to the CcmE/CycJ family.</text>
</comment>
<keyword id="KW-0997">Cell inner membrane</keyword>
<keyword id="KW-1003">Cell membrane</keyword>
<keyword id="KW-0201">Cytochrome c-type biogenesis</keyword>
<keyword id="KW-0349">Heme</keyword>
<keyword id="KW-0408">Iron</keyword>
<keyword id="KW-0472">Membrane</keyword>
<keyword id="KW-0479">Metal-binding</keyword>
<keyword id="KW-0735">Signal-anchor</keyword>
<keyword id="KW-0812">Transmembrane</keyword>
<keyword id="KW-1133">Transmembrane helix</keyword>
<proteinExistence type="inferred from homology"/>
<organism>
    <name type="scientific">Cereibacter sphaeroides (strain ATCC 17029 / ATH 2.4.9)</name>
    <name type="common">Rhodobacter sphaeroides</name>
    <dbReference type="NCBI Taxonomy" id="349101"/>
    <lineage>
        <taxon>Bacteria</taxon>
        <taxon>Pseudomonadati</taxon>
        <taxon>Pseudomonadota</taxon>
        <taxon>Alphaproteobacteria</taxon>
        <taxon>Rhodobacterales</taxon>
        <taxon>Paracoccaceae</taxon>
        <taxon>Cereibacter</taxon>
    </lineage>
</organism>
<protein>
    <recommendedName>
        <fullName evidence="1">Cytochrome c-type biogenesis protein CcmE</fullName>
    </recommendedName>
    <alternativeName>
        <fullName evidence="1">Cytochrome c maturation protein E</fullName>
    </alternativeName>
    <alternativeName>
        <fullName evidence="1">Heme chaperone CcmE</fullName>
    </alternativeName>
</protein>
<gene>
    <name evidence="1" type="primary">ccmE</name>
    <name evidence="1" type="synonym">cycJ</name>
    <name type="ordered locus">Rsph17029_1591</name>
</gene>
<feature type="chain" id="PRO_1000070841" description="Cytochrome c-type biogenesis protein CcmE">
    <location>
        <begin position="1"/>
        <end position="151"/>
    </location>
</feature>
<feature type="topological domain" description="Cytoplasmic" evidence="1">
    <location>
        <begin position="1"/>
        <end position="9"/>
    </location>
</feature>
<feature type="transmembrane region" description="Helical; Signal-anchor for type II membrane protein" evidence="1">
    <location>
        <begin position="10"/>
        <end position="30"/>
    </location>
</feature>
<feature type="topological domain" description="Periplasmic" evidence="1">
    <location>
        <begin position="31"/>
        <end position="151"/>
    </location>
</feature>
<feature type="binding site" description="covalent" evidence="1">
    <location>
        <position position="123"/>
    </location>
    <ligand>
        <name>heme</name>
        <dbReference type="ChEBI" id="CHEBI:30413"/>
    </ligand>
</feature>
<feature type="binding site" description="axial binding residue" evidence="1">
    <location>
        <position position="127"/>
    </location>
    <ligand>
        <name>heme</name>
        <dbReference type="ChEBI" id="CHEBI:30413"/>
    </ligand>
    <ligandPart>
        <name>Fe</name>
        <dbReference type="ChEBI" id="CHEBI:18248"/>
    </ligandPart>
</feature>